<feature type="chain" id="PRO_0000255685" description="Small ribosomal subunit protein uS17">
    <location>
        <begin position="1"/>
        <end position="80"/>
    </location>
</feature>
<name>RS17_CHESB</name>
<comment type="function">
    <text evidence="1">One of the primary rRNA binding proteins, it binds specifically to the 5'-end of 16S ribosomal RNA.</text>
</comment>
<comment type="subunit">
    <text evidence="1">Part of the 30S ribosomal subunit.</text>
</comment>
<comment type="similarity">
    <text evidence="1">Belongs to the universal ribosomal protein uS17 family.</text>
</comment>
<keyword id="KW-0687">Ribonucleoprotein</keyword>
<keyword id="KW-0689">Ribosomal protein</keyword>
<keyword id="KW-0694">RNA-binding</keyword>
<keyword id="KW-0699">rRNA-binding</keyword>
<sequence length="80" mass="9315">MPKRVLQGTVVSDKNDKTVVVRVERRFAHPLLKKTVRRSKRYKAHDENNMCKVGDVVLIQETRPISKDKCWVVVNENQAQ</sequence>
<evidence type="ECO:0000255" key="1">
    <source>
        <dbReference type="HAMAP-Rule" id="MF_01345"/>
    </source>
</evidence>
<evidence type="ECO:0000305" key="2"/>
<reference key="1">
    <citation type="submission" date="2006-06" db="EMBL/GenBank/DDBJ databases">
        <title>Complete sequence of chromosome of Mesorhizobium sp. BNC1.</title>
        <authorList>
            <consortium name="US DOE Joint Genome Institute"/>
            <person name="Copeland A."/>
            <person name="Lucas S."/>
            <person name="Lapidus A."/>
            <person name="Barry K."/>
            <person name="Detter J.C."/>
            <person name="Glavina del Rio T."/>
            <person name="Hammon N."/>
            <person name="Israni S."/>
            <person name="Dalin E."/>
            <person name="Tice H."/>
            <person name="Pitluck S."/>
            <person name="Chertkov O."/>
            <person name="Brettin T."/>
            <person name="Bruce D."/>
            <person name="Han C."/>
            <person name="Tapia R."/>
            <person name="Gilna P."/>
            <person name="Schmutz J."/>
            <person name="Larimer F."/>
            <person name="Land M."/>
            <person name="Hauser L."/>
            <person name="Kyrpides N."/>
            <person name="Mikhailova N."/>
            <person name="Richardson P."/>
        </authorList>
    </citation>
    <scope>NUCLEOTIDE SEQUENCE [LARGE SCALE GENOMIC DNA]</scope>
    <source>
        <strain>BNC1</strain>
    </source>
</reference>
<accession>Q11HR1</accession>
<proteinExistence type="inferred from homology"/>
<organism>
    <name type="scientific">Chelativorans sp. (strain BNC1)</name>
    <dbReference type="NCBI Taxonomy" id="266779"/>
    <lineage>
        <taxon>Bacteria</taxon>
        <taxon>Pseudomonadati</taxon>
        <taxon>Pseudomonadota</taxon>
        <taxon>Alphaproteobacteria</taxon>
        <taxon>Hyphomicrobiales</taxon>
        <taxon>Phyllobacteriaceae</taxon>
        <taxon>Chelativorans</taxon>
    </lineage>
</organism>
<dbReference type="EMBL" id="CP000390">
    <property type="protein sequence ID" value="ABG63064.1"/>
    <property type="molecule type" value="Genomic_DNA"/>
</dbReference>
<dbReference type="SMR" id="Q11HR1"/>
<dbReference type="STRING" id="266779.Meso_1669"/>
<dbReference type="KEGG" id="mes:Meso_1669"/>
<dbReference type="eggNOG" id="COG0186">
    <property type="taxonomic scope" value="Bacteria"/>
</dbReference>
<dbReference type="HOGENOM" id="CLU_073626_1_1_5"/>
<dbReference type="OrthoDB" id="9811714at2"/>
<dbReference type="GO" id="GO:0022627">
    <property type="term" value="C:cytosolic small ribosomal subunit"/>
    <property type="evidence" value="ECO:0007669"/>
    <property type="project" value="TreeGrafter"/>
</dbReference>
<dbReference type="GO" id="GO:0019843">
    <property type="term" value="F:rRNA binding"/>
    <property type="evidence" value="ECO:0007669"/>
    <property type="project" value="UniProtKB-UniRule"/>
</dbReference>
<dbReference type="GO" id="GO:0003735">
    <property type="term" value="F:structural constituent of ribosome"/>
    <property type="evidence" value="ECO:0007669"/>
    <property type="project" value="InterPro"/>
</dbReference>
<dbReference type="GO" id="GO:0006412">
    <property type="term" value="P:translation"/>
    <property type="evidence" value="ECO:0007669"/>
    <property type="project" value="UniProtKB-UniRule"/>
</dbReference>
<dbReference type="CDD" id="cd00364">
    <property type="entry name" value="Ribosomal_uS17"/>
    <property type="match status" value="1"/>
</dbReference>
<dbReference type="Gene3D" id="2.40.50.140">
    <property type="entry name" value="Nucleic acid-binding proteins"/>
    <property type="match status" value="1"/>
</dbReference>
<dbReference type="HAMAP" id="MF_01345_B">
    <property type="entry name" value="Ribosomal_uS17_B"/>
    <property type="match status" value="1"/>
</dbReference>
<dbReference type="InterPro" id="IPR012340">
    <property type="entry name" value="NA-bd_OB-fold"/>
</dbReference>
<dbReference type="InterPro" id="IPR000266">
    <property type="entry name" value="Ribosomal_uS17"/>
</dbReference>
<dbReference type="InterPro" id="IPR019984">
    <property type="entry name" value="Ribosomal_uS17_bact/chlr"/>
</dbReference>
<dbReference type="InterPro" id="IPR019979">
    <property type="entry name" value="Ribosomal_uS17_CS"/>
</dbReference>
<dbReference type="NCBIfam" id="NF004123">
    <property type="entry name" value="PRK05610.1"/>
    <property type="match status" value="1"/>
</dbReference>
<dbReference type="NCBIfam" id="TIGR03635">
    <property type="entry name" value="uS17_bact"/>
    <property type="match status" value="1"/>
</dbReference>
<dbReference type="PANTHER" id="PTHR10744">
    <property type="entry name" value="40S RIBOSOMAL PROTEIN S11 FAMILY MEMBER"/>
    <property type="match status" value="1"/>
</dbReference>
<dbReference type="PANTHER" id="PTHR10744:SF1">
    <property type="entry name" value="SMALL RIBOSOMAL SUBUNIT PROTEIN US17M"/>
    <property type="match status" value="1"/>
</dbReference>
<dbReference type="Pfam" id="PF00366">
    <property type="entry name" value="Ribosomal_S17"/>
    <property type="match status" value="1"/>
</dbReference>
<dbReference type="PRINTS" id="PR00973">
    <property type="entry name" value="RIBOSOMALS17"/>
</dbReference>
<dbReference type="SUPFAM" id="SSF50249">
    <property type="entry name" value="Nucleic acid-binding proteins"/>
    <property type="match status" value="1"/>
</dbReference>
<dbReference type="PROSITE" id="PS00056">
    <property type="entry name" value="RIBOSOMAL_S17"/>
    <property type="match status" value="1"/>
</dbReference>
<protein>
    <recommendedName>
        <fullName evidence="1">Small ribosomal subunit protein uS17</fullName>
    </recommendedName>
    <alternativeName>
        <fullName evidence="2">30S ribosomal protein S17</fullName>
    </alternativeName>
</protein>
<gene>
    <name evidence="1" type="primary">rpsQ</name>
    <name type="ordered locus">Meso_1669</name>
</gene>